<comment type="function">
    <text evidence="1 3 5">Encapsidates the genomic RNA, protecting it from nucleases (PubMed:23702688). Displays high affinity for single-stranded nucleic acid (PubMed:23702688). The encapsidated genomic RNA is termed the nucleocapsid (NC) or ribonucleoprotein (PubMed:23702688). The ribonucleoprotein has a non-helical structure (By similarity). Serves as template for viral transcription and replication. After replication, the nucleocapsid is recruited to the host Golgi apparatus by glycoprotein Gn for packaging into virus particles (By similarity).</text>
</comment>
<comment type="subunit">
    <text evidence="1 3 4 5">Homodimer (By similarity). Homohexamer; ring-shaped, necessary to form the nucleocapsid (PubMed:23702688). Homopentamers; opened pentamers in solution (By similarity). Binds to viral genomic RNA (By similarity). Interacts with glycoprotein Gn; this interaction allows packaging of nucleocapsids into virions (By similarity).</text>
</comment>
<comment type="subcellular location">
    <subcellularLocation>
        <location evidence="1">Virion</location>
    </subcellularLocation>
    <subcellularLocation>
        <location evidence="1">Host cytoplasm</location>
    </subcellularLocation>
    <subcellularLocation>
        <location evidence="1">Host nucleus</location>
    </subcellularLocation>
    <subcellularLocation>
        <location evidence="2">Host endoplasmic reticulum-Golgi intermediate compartment</location>
    </subcellularLocation>
    <subcellularLocation>
        <location evidence="2">Host Golgi apparatus</location>
    </subcellularLocation>
</comment>
<comment type="domain">
    <text evidence="4">The N-terminus is involved in homooligomerization.</text>
</comment>
<comment type="miscellaneous">
    <text evidence="2">Binds suramin, which inhibits the replication of SFTSV in vivo.</text>
</comment>
<comment type="similarity">
    <text evidence="6">Belongs to the phlebovirus nucleocapsid protein family.</text>
</comment>
<protein>
    <recommendedName>
        <fullName>Nucleoprotein</fullName>
    </recommendedName>
    <alternativeName>
        <fullName>Nucleocapsid protein</fullName>
        <shortName>Protein N</shortName>
    </alternativeName>
</protein>
<organismHost>
    <name type="scientific">Haemaphysalis longicornis</name>
    <name type="common">Bush tick</name>
    <dbReference type="NCBI Taxonomy" id="44386"/>
</organismHost>
<organismHost>
    <name type="scientific">Homo sapiens</name>
    <name type="common">Human</name>
    <dbReference type="NCBI Taxonomy" id="9606"/>
</organismHost>
<name>NCAP_SFTSV</name>
<gene>
    <name type="primary">NP</name>
</gene>
<proteinExistence type="evidence at protein level"/>
<sequence length="245" mass="26985">MSEWSRIAVEFGEQQLNLTELEDFARELAYEGLDPALIIKKLKETGGDDWVKDTKFIIVFALTRGNKIVKASGKMSNSGSKRLMALQEKYGLVERAETRLSITPVRVAQSLPTWTCAAAAALKEYLPVGPAVMNLKVENYPPEMMCMAFGSLIPTAGVSEATTKTLMEAYSLWQDAFTKTINVKMRGASKTEVYNSFRDPLHAAVNSVFFPNDVRVKWLKAKGILGPDGVPSRAAEVAAAAYRNL</sequence>
<reference key="1">
    <citation type="journal article" date="2011" name="N. Engl. J. Med.">
        <title>Fever with thrombocytopenia associated with a novel bunyavirus in China.</title>
        <authorList>
            <person name="Yu X.J."/>
            <person name="Liang M.F."/>
            <person name="Zhang S.Y."/>
            <person name="Liu Y."/>
            <person name="Li J.D."/>
            <person name="Sun Y.L."/>
            <person name="Zhang L."/>
            <person name="Zhang Q.F."/>
            <person name="Popov V.L."/>
            <person name="Li C."/>
            <person name="Qu J."/>
            <person name="Li Q."/>
            <person name="Zhang Y.P."/>
            <person name="Hai R."/>
            <person name="Wu W."/>
            <person name="Wang Q."/>
            <person name="Zhan F.X."/>
            <person name="Wang X.J."/>
            <person name="Kan B."/>
            <person name="Wang S.W."/>
            <person name="Wan K.L."/>
            <person name="Jing H.Q."/>
            <person name="Lu J.X."/>
            <person name="Yin W.W."/>
            <person name="Zhou H."/>
            <person name="Guan X.H."/>
            <person name="Liu J.F."/>
            <person name="Bi Z.Q."/>
            <person name="Liu G.H."/>
            <person name="Ren J."/>
            <person name="Wang H."/>
            <person name="Zhao Z."/>
            <person name="Song J.D."/>
            <person name="He J.R."/>
            <person name="Wan T."/>
            <person name="Zhang J.S."/>
            <person name="Fu X.P."/>
            <person name="Sun L.N."/>
            <person name="Dong X.P."/>
            <person name="Feng Z.J."/>
            <person name="Yang W.Z."/>
            <person name="Hong T."/>
            <person name="Zhang Y."/>
            <person name="Walker D.H."/>
            <person name="Wang Y."/>
            <person name="Li D.X."/>
        </authorList>
    </citation>
    <scope>NUCLEOTIDE SEQUENCE [GENOMIC DNA]</scope>
</reference>
<reference key="2">
    <citation type="journal article" date="2015" name="J. Virol.">
        <title>A reverse genetic system for severe fever with thrombocytopenia syndrome virus.</title>
        <authorList>
            <person name="Brennan B."/>
            <person name="Li P."/>
            <person name="Zhang S."/>
            <person name="Li A."/>
            <person name="Liang M."/>
            <person name="Li D."/>
            <person name="Elliott R.M."/>
        </authorList>
    </citation>
    <scope>NUCLEOTIDE SEQUENCE [LARGE SCALE GENOMIC DNA]</scope>
</reference>
<reference key="3">
    <citation type="journal article" date="2013" name="Protein Cell">
        <title>The nucleoprotein of severe fever with thrombocytopenia syndrome virus processes a stable hexameric ring to facilitate RNA encapsidation.</title>
        <authorList>
            <person name="Zhou H."/>
            <person name="Sun Y."/>
            <person name="Wang Y."/>
            <person name="Liu M."/>
            <person name="Liu C."/>
            <person name="Wang W."/>
            <person name="Liu X."/>
            <person name="Li L."/>
            <person name="Deng F."/>
            <person name="Wang H."/>
            <person name="Guo Y."/>
            <person name="Lou Z."/>
        </authorList>
    </citation>
    <scope>X-RAY CRYSTALLOGRAPHY (2.80 ANGSTROMS)</scope>
    <scope>SUBUNIT</scope>
    <scope>FUNCTION</scope>
    <scope>MUTAGENESIS OF ALA-8; PHE-11; ALA-25; LEU-28; ARG-64; LYS-67; LYS-70; ARG-95; ARG-99; ARG-106; LYS-164; LYS-184; ARG-186 AND GLU-192</scope>
</reference>
<feature type="chain" id="PRO_0000456176" description="Nucleoprotein">
    <location>
        <begin position="1"/>
        <end position="245"/>
    </location>
</feature>
<feature type="binding site" evidence="4">
    <location>
        <position position="30"/>
    </location>
    <ligand>
        <name>RNA</name>
        <dbReference type="ChEBI" id="CHEBI:33697"/>
    </ligand>
</feature>
<feature type="binding site" evidence="5">
    <location>
        <position position="64"/>
    </location>
    <ligand>
        <name>RNA</name>
        <dbReference type="ChEBI" id="CHEBI:33697"/>
    </ligand>
</feature>
<feature type="binding site" evidence="5">
    <location>
        <position position="67"/>
    </location>
    <ligand>
        <name>RNA</name>
        <dbReference type="ChEBI" id="CHEBI:33697"/>
    </ligand>
</feature>
<feature type="binding site" evidence="5">
    <location>
        <position position="70"/>
    </location>
    <ligand>
        <name>RNA</name>
        <dbReference type="ChEBI" id="CHEBI:33697"/>
    </ligand>
</feature>
<feature type="binding site" evidence="5">
    <location>
        <position position="95"/>
    </location>
    <ligand>
        <name>RNA</name>
        <dbReference type="ChEBI" id="CHEBI:33697"/>
    </ligand>
</feature>
<feature type="binding site" evidence="5">
    <location>
        <position position="106"/>
    </location>
    <ligand>
        <name>RNA</name>
        <dbReference type="ChEBI" id="CHEBI:33697"/>
    </ligand>
</feature>
<feature type="binding site" evidence="5">
    <location>
        <position position="184"/>
    </location>
    <ligand>
        <name>RNA</name>
        <dbReference type="ChEBI" id="CHEBI:33697"/>
    </ligand>
</feature>
<feature type="binding site" evidence="4">
    <location>
        <position position="186"/>
    </location>
    <ligand>
        <name>RNA</name>
        <dbReference type="ChEBI" id="CHEBI:33697"/>
    </ligand>
</feature>
<feature type="binding site" evidence="4">
    <location>
        <position position="196"/>
    </location>
    <ligand>
        <name>RNA</name>
        <dbReference type="ChEBI" id="CHEBI:33697"/>
    </ligand>
</feature>
<feature type="mutagenesis site" description="Complete loss of ringshaped oligomers." evidence="5">
    <original>A</original>
    <variation>K</variation>
    <location>
        <position position="8"/>
    </location>
</feature>
<feature type="mutagenesis site" description="Complete loss of ringshaped oligomers and RNA-binding." evidence="5">
    <original>F</original>
    <variation>D</variation>
    <location>
        <position position="11"/>
    </location>
</feature>
<feature type="mutagenesis site" description="Complete loss of ringshaped oligomers." evidence="5">
    <original>A</original>
    <variation>D</variation>
    <location>
        <position position="25"/>
    </location>
</feature>
<feature type="mutagenesis site" description="200-fold decrease in RNA binding." evidence="5">
    <original>L</original>
    <variation>E</variation>
    <location>
        <position position="28"/>
    </location>
</feature>
<feature type="mutagenesis site" description="Complete loss of ringshaped oligomers." evidence="5">
    <original>L</original>
    <variation>K</variation>
    <location>
        <position position="28"/>
    </location>
</feature>
<feature type="mutagenesis site" description="Partial loss of RNA-binding. Complete loss of RNA-binding; when associated with A-67 and A-184." evidence="5">
    <original>R</original>
    <variation>A</variation>
    <location>
        <position position="64"/>
    </location>
</feature>
<feature type="mutagenesis site" description="Partial loss of RNA-binding. Complete loss of RNA-binding; when associated with A-64 and A-184." evidence="5">
    <original>K</original>
    <variation>A</variation>
    <location>
        <position position="67"/>
    </location>
</feature>
<feature type="mutagenesis site" description="Partial loss of RNA-binding." evidence="5">
    <original>K</original>
    <variation>A</variation>
    <location>
        <position position="70"/>
    </location>
</feature>
<feature type="mutagenesis site" description="Partial loss of RNA-binding." evidence="5">
    <original>R</original>
    <variation>A</variation>
    <location>
        <position position="95"/>
    </location>
</feature>
<feature type="mutagenesis site" description="No effect on oligomerization." evidence="5">
    <original>R</original>
    <variation>A</variation>
    <location>
        <position position="99"/>
    </location>
</feature>
<feature type="mutagenesis site" description="Partial loss of RNA-binding. No effect on oligomerization." evidence="5">
    <original>R</original>
    <variation>A</variation>
    <location>
        <position position="106"/>
    </location>
</feature>
<feature type="mutagenesis site" description="No effect on oligomerization." evidence="5">
    <original>K</original>
    <variation>A</variation>
    <location>
        <position position="164"/>
    </location>
</feature>
<feature type="mutagenesis site" description="Partial loss of RNA-binding. Complete loss of RNA-binding; when associated with A-64 and A-67." evidence="5">
    <original>K</original>
    <variation>A</variation>
    <location>
        <position position="184"/>
    </location>
</feature>
<feature type="mutagenesis site" description="Partial loss of RNA-binding. No effect on oligomerization." evidence="5">
    <original>R</original>
    <variation>A</variation>
    <location>
        <position position="186"/>
    </location>
</feature>
<feature type="mutagenesis site" description="No effect on oligomerization." evidence="5">
    <original>E</original>
    <variation>A</variation>
    <location>
        <position position="192"/>
    </location>
</feature>
<keyword id="KW-0167">Capsid protein</keyword>
<keyword id="KW-1035">Host cytoplasm</keyword>
<keyword id="KW-1040">Host Golgi apparatus</keyword>
<keyword id="KW-1048">Host nucleus</keyword>
<keyword id="KW-1185">Reference proteome</keyword>
<keyword id="KW-0687">Ribonucleoprotein</keyword>
<keyword id="KW-0694">RNA-binding</keyword>
<keyword id="KW-0543">Viral nucleoprotein</keyword>
<keyword id="KW-0946">Virion</keyword>
<accession>P0DW82</accession>
<dbReference type="EMBL" id="HM745932">
    <property type="status" value="NOT_ANNOTATED_CDS"/>
    <property type="molecule type" value="Genomic_RNA"/>
</dbReference>
<dbReference type="EMBL" id="KP202165">
    <property type="status" value="NOT_ANNOTATED_CDS"/>
    <property type="molecule type" value="Genomic_RNA"/>
</dbReference>
<dbReference type="RefSeq" id="YP_006504092.1">
    <property type="nucleotide sequence ID" value="NC_018137.1"/>
</dbReference>
<dbReference type="SMR" id="P0DW82"/>
<dbReference type="KEGG" id="vg:13231122"/>
<dbReference type="OrthoDB" id="11777at10239"/>
<dbReference type="Proteomes" id="UP000117954">
    <property type="component" value="Genome"/>
</dbReference>
<dbReference type="Proteomes" id="UP000201130">
    <property type="component" value="Genome"/>
</dbReference>
<dbReference type="GO" id="GO:0044172">
    <property type="term" value="C:host cell endoplasmic reticulum-Golgi intermediate compartment"/>
    <property type="evidence" value="ECO:0007669"/>
    <property type="project" value="UniProtKB-SubCell"/>
</dbReference>
<dbReference type="GO" id="GO:0044177">
    <property type="term" value="C:host cell Golgi apparatus"/>
    <property type="evidence" value="ECO:0007669"/>
    <property type="project" value="UniProtKB-SubCell"/>
</dbReference>
<dbReference type="GO" id="GO:0042025">
    <property type="term" value="C:host cell nucleus"/>
    <property type="evidence" value="ECO:0007669"/>
    <property type="project" value="UniProtKB-SubCell"/>
</dbReference>
<dbReference type="GO" id="GO:1990904">
    <property type="term" value="C:ribonucleoprotein complex"/>
    <property type="evidence" value="ECO:0007669"/>
    <property type="project" value="UniProtKB-KW"/>
</dbReference>
<dbReference type="GO" id="GO:0019013">
    <property type="term" value="C:viral nucleocapsid"/>
    <property type="evidence" value="ECO:0007669"/>
    <property type="project" value="UniProtKB-KW"/>
</dbReference>
<dbReference type="GO" id="GO:0003723">
    <property type="term" value="F:RNA binding"/>
    <property type="evidence" value="ECO:0007669"/>
    <property type="project" value="UniProtKB-KW"/>
</dbReference>
<dbReference type="InterPro" id="IPR009522">
    <property type="entry name" value="Capsid_Phlebovir/Tenuivir"/>
</dbReference>
<dbReference type="InterPro" id="IPR015971">
    <property type="entry name" value="Nucleocapsid_Phlebovirus"/>
</dbReference>
<dbReference type="Pfam" id="PF05733">
    <property type="entry name" value="Tenui_N"/>
    <property type="match status" value="1"/>
</dbReference>
<dbReference type="PIRSF" id="PIRSF003953">
    <property type="entry name" value="N_PhelboV"/>
    <property type="match status" value="1"/>
</dbReference>
<evidence type="ECO:0000250" key="1">
    <source>
        <dbReference type="UniProtKB" id="D3K5I7"/>
    </source>
</evidence>
<evidence type="ECO:0000250" key="2">
    <source>
        <dbReference type="UniProtKB" id="I6WJ72"/>
    </source>
</evidence>
<evidence type="ECO:0000250" key="3">
    <source>
        <dbReference type="UniProtKB" id="P21700"/>
    </source>
</evidence>
<evidence type="ECO:0000250" key="4">
    <source>
        <dbReference type="UniProtKB" id="P21701"/>
    </source>
</evidence>
<evidence type="ECO:0000269" key="5">
    <source>
    </source>
</evidence>
<evidence type="ECO:0000305" key="6"/>
<organism>
    <name type="scientific">SFTS phlebovirus (isolate SFTSV/Human/China/HB29/2010)</name>
    <name type="common">Severe fever with thrombocytopenia virus</name>
    <dbReference type="NCBI Taxonomy" id="992212"/>
    <lineage>
        <taxon>Viruses</taxon>
        <taxon>Riboviria</taxon>
        <taxon>Orthornavirae</taxon>
        <taxon>Negarnaviricota</taxon>
        <taxon>Polyploviricotina</taxon>
        <taxon>Ellioviricetes</taxon>
        <taxon>Bunyavirales</taxon>
        <taxon>Phenuiviridae</taxon>
        <taxon>Bandavirus</taxon>
        <taxon>Bandavirus dabieense</taxon>
    </lineage>
</organism>